<accession>A0A2P1BSS9</accession>
<organism evidence="7">
    <name type="scientific">Micrurus mipartitus</name>
    <name type="common">Red-tailed coral snake</name>
    <dbReference type="NCBI Taxonomy" id="430902"/>
    <lineage>
        <taxon>Eukaryota</taxon>
        <taxon>Metazoa</taxon>
        <taxon>Chordata</taxon>
        <taxon>Craniata</taxon>
        <taxon>Vertebrata</taxon>
        <taxon>Euteleostomi</taxon>
        <taxon>Lepidosauria</taxon>
        <taxon>Squamata</taxon>
        <taxon>Bifurcata</taxon>
        <taxon>Unidentata</taxon>
        <taxon>Episquamata</taxon>
        <taxon>Toxicofera</taxon>
        <taxon>Serpentes</taxon>
        <taxon>Colubroidea</taxon>
        <taxon>Elapidae</taxon>
        <taxon>Elapinae</taxon>
        <taxon>Micrurus</taxon>
    </lineage>
</organism>
<feature type="signal peptide" evidence="3">
    <location>
        <begin position="1"/>
        <end position="21"/>
    </location>
</feature>
<feature type="chain" id="PRO_5015174314" description="Mipartoxin-2" evidence="3">
    <location>
        <begin position="22"/>
        <end position="81"/>
    </location>
</feature>
<feature type="disulfide bond" evidence="2">
    <location>
        <begin position="24"/>
        <end position="42"/>
    </location>
</feature>
<feature type="disulfide bond" evidence="2">
    <location>
        <begin position="35"/>
        <end position="61"/>
    </location>
</feature>
<feature type="disulfide bond" evidence="2">
    <location>
        <begin position="65"/>
        <end position="73"/>
    </location>
</feature>
<feature type="disulfide bond" evidence="2">
    <location>
        <begin position="74"/>
        <end position="79"/>
    </location>
</feature>
<comment type="function">
    <text evidence="1">Snake venom neurotoxin that blocks neuromuscular transmission, presenting a postsynaptic action through the nicotinic acetylcholine receptor (nAChR). Has no cytotoxic activity.</text>
</comment>
<comment type="subcellular location">
    <subcellularLocation>
        <location evidence="1">Secreted</location>
    </subcellularLocation>
</comment>
<comment type="tissue specificity">
    <text evidence="4">Expressed by the venom gland.</text>
</comment>
<comment type="similarity">
    <text evidence="6">Belongs to the three-finger toxin family. Short-chain subfamily.</text>
</comment>
<name>3SX2_MICMP</name>
<sequence length="81" mass="9177">MKTLLLTLVVVTIVCLDLGNSLICYVSREGQTQTCPEGMNLCEKYAVSYFHDGRYFFTYECTSTCHRGDRNVCCSTDLCNK</sequence>
<reference evidence="6" key="1">
    <citation type="journal article" date="2019" name="Toxicon">
        <title>Novel three-finger toxins from Micrurus dumerilii and Micrurus mipartitus coral snake venoms: Phylogenetic relationships and characterization of Clarkitoxin-I-Mdum.</title>
        <authorList>
            <person name="Rey-Suarez P."/>
            <person name="Saldarriaga-Cordoba M."/>
            <person name="Torres U."/>
            <person name="Marin-Villa M."/>
            <person name="Lomonte B."/>
            <person name="Nunez V."/>
        </authorList>
    </citation>
    <scope>NUCLEOTIDE SEQUENCE [MRNA]</scope>
    <scope>TISSUE SPECIFICITY</scope>
    <source>
        <tissue evidence="5">Venom gland</tissue>
    </source>
</reference>
<proteinExistence type="evidence at transcript level"/>
<evidence type="ECO:0000250" key="1">
    <source>
        <dbReference type="UniProtKB" id="B3EWF8"/>
    </source>
</evidence>
<evidence type="ECO:0000250" key="2">
    <source>
        <dbReference type="UniProtKB" id="P07526"/>
    </source>
</evidence>
<evidence type="ECO:0000255" key="3"/>
<evidence type="ECO:0000269" key="4">
    <source>
    </source>
</evidence>
<evidence type="ECO:0000303" key="5">
    <source>
    </source>
</evidence>
<evidence type="ECO:0000305" key="6"/>
<evidence type="ECO:0000312" key="7">
    <source>
        <dbReference type="EMBL" id="AVI57321.1"/>
    </source>
</evidence>
<dbReference type="EMBL" id="KY635902">
    <property type="protein sequence ID" value="AVI57321.1"/>
    <property type="molecule type" value="mRNA"/>
</dbReference>
<dbReference type="SMR" id="A0A2P1BSS9"/>
<dbReference type="GO" id="GO:0005576">
    <property type="term" value="C:extracellular region"/>
    <property type="evidence" value="ECO:0007669"/>
    <property type="project" value="UniProtKB-SubCell"/>
</dbReference>
<dbReference type="GO" id="GO:0030550">
    <property type="term" value="F:acetylcholine receptor inhibitor activity"/>
    <property type="evidence" value="ECO:0007669"/>
    <property type="project" value="UniProtKB-KW"/>
</dbReference>
<dbReference type="GO" id="GO:0099106">
    <property type="term" value="F:ion channel regulator activity"/>
    <property type="evidence" value="ECO:0007669"/>
    <property type="project" value="UniProtKB-KW"/>
</dbReference>
<dbReference type="GO" id="GO:0090729">
    <property type="term" value="F:toxin activity"/>
    <property type="evidence" value="ECO:0007669"/>
    <property type="project" value="UniProtKB-KW"/>
</dbReference>
<dbReference type="Gene3D" id="2.10.60.10">
    <property type="entry name" value="CD59"/>
    <property type="match status" value="1"/>
</dbReference>
<dbReference type="InterPro" id="IPR045860">
    <property type="entry name" value="Snake_toxin-like_sf"/>
</dbReference>
<dbReference type="SUPFAM" id="SSF57302">
    <property type="entry name" value="Snake toxin-like"/>
    <property type="match status" value="1"/>
</dbReference>
<protein>
    <recommendedName>
        <fullName evidence="6">Mipartoxin-2</fullName>
    </recommendedName>
    <alternativeName>
        <fullName evidence="5">Mipartoxin-II</fullName>
    </alternativeName>
    <alternativeName>
        <fullName evidence="5">Three-finger toxin-03</fullName>
        <shortName evidence="5">3FTx-03</shortName>
    </alternativeName>
</protein>
<keyword id="KW-0008">Acetylcholine receptor inhibiting toxin</keyword>
<keyword id="KW-1015">Disulfide bond</keyword>
<keyword id="KW-0872">Ion channel impairing toxin</keyword>
<keyword id="KW-0528">Neurotoxin</keyword>
<keyword id="KW-0629">Postsynaptic neurotoxin</keyword>
<keyword id="KW-0964">Secreted</keyword>
<keyword id="KW-0732">Signal</keyword>
<keyword id="KW-0800">Toxin</keyword>